<proteinExistence type="inferred from homology"/>
<comment type="function">
    <text evidence="1">With S4 and S5 plays an important role in translational accuracy. Located at the interface of the 30S and 50S subunits (By similarity).</text>
</comment>
<comment type="subunit">
    <text evidence="1">Part of the 30S ribosomal subunit.</text>
</comment>
<comment type="subcellular location">
    <subcellularLocation>
        <location>Plastid</location>
        <location>Chloroplast</location>
    </subcellularLocation>
</comment>
<comment type="similarity">
    <text evidence="3">Belongs to the universal ribosomal protein uS12 family.</text>
</comment>
<protein>
    <recommendedName>
        <fullName evidence="2">Small ribosomal subunit protein uS12cz/uS12cy</fullName>
    </recommendedName>
    <alternativeName>
        <fullName evidence="3">30S ribosomal protein S12, chloroplastic</fullName>
    </alternativeName>
</protein>
<organism>
    <name type="scientific">Gossypium hirsutum</name>
    <name type="common">Upland cotton</name>
    <name type="synonym">Gossypium mexicanum</name>
    <dbReference type="NCBI Taxonomy" id="3635"/>
    <lineage>
        <taxon>Eukaryota</taxon>
        <taxon>Viridiplantae</taxon>
        <taxon>Streptophyta</taxon>
        <taxon>Embryophyta</taxon>
        <taxon>Tracheophyta</taxon>
        <taxon>Spermatophyta</taxon>
        <taxon>Magnoliopsida</taxon>
        <taxon>eudicotyledons</taxon>
        <taxon>Gunneridae</taxon>
        <taxon>Pentapetalae</taxon>
        <taxon>rosids</taxon>
        <taxon>malvids</taxon>
        <taxon>Malvales</taxon>
        <taxon>Malvaceae</taxon>
        <taxon>Malvoideae</taxon>
        <taxon>Gossypium</taxon>
    </lineage>
</organism>
<feature type="chain" id="PRO_0000276612" description="Small ribosomal subunit protein uS12cz/uS12cy">
    <location>
        <begin position="1"/>
        <end position="123"/>
    </location>
</feature>
<geneLocation type="chloroplast"/>
<name>RR12_GOSHI</name>
<dbReference type="EMBL" id="DQ345959">
    <property type="protein sequence ID" value="ABC73673.1"/>
    <property type="molecule type" value="Genomic_DNA"/>
</dbReference>
<dbReference type="EMBL" id="DQ345959">
    <property type="protein sequence ID" value="ABC73686.1"/>
    <property type="molecule type" value="Genomic_DNA"/>
</dbReference>
<dbReference type="SMR" id="Q2L8Y5"/>
<dbReference type="KEGG" id="ghi:3989226"/>
<dbReference type="KEGG" id="ghi:3989227"/>
<dbReference type="OrthoDB" id="40500at41938"/>
<dbReference type="Proteomes" id="UP000189702">
    <property type="component" value="Unplaced"/>
</dbReference>
<dbReference type="GO" id="GO:0009507">
    <property type="term" value="C:chloroplast"/>
    <property type="evidence" value="ECO:0007669"/>
    <property type="project" value="UniProtKB-SubCell"/>
</dbReference>
<dbReference type="GO" id="GO:0005840">
    <property type="term" value="C:ribosome"/>
    <property type="evidence" value="ECO:0000318"/>
    <property type="project" value="GO_Central"/>
</dbReference>
<dbReference type="GO" id="GO:0015935">
    <property type="term" value="C:small ribosomal subunit"/>
    <property type="evidence" value="ECO:0007669"/>
    <property type="project" value="InterPro"/>
</dbReference>
<dbReference type="GO" id="GO:0019843">
    <property type="term" value="F:rRNA binding"/>
    <property type="evidence" value="ECO:0007669"/>
    <property type="project" value="UniProtKB-UniRule"/>
</dbReference>
<dbReference type="GO" id="GO:0003735">
    <property type="term" value="F:structural constituent of ribosome"/>
    <property type="evidence" value="ECO:0000318"/>
    <property type="project" value="GO_Central"/>
</dbReference>
<dbReference type="GO" id="GO:0006412">
    <property type="term" value="P:translation"/>
    <property type="evidence" value="ECO:0000318"/>
    <property type="project" value="GO_Central"/>
</dbReference>
<dbReference type="CDD" id="cd03368">
    <property type="entry name" value="Ribosomal_S12"/>
    <property type="match status" value="1"/>
</dbReference>
<dbReference type="FunFam" id="2.40.50.140:FF:000008">
    <property type="entry name" value="30S ribosomal protein S12, chloroplastic"/>
    <property type="match status" value="1"/>
</dbReference>
<dbReference type="Gene3D" id="2.40.50.140">
    <property type="entry name" value="Nucleic acid-binding proteins"/>
    <property type="match status" value="1"/>
</dbReference>
<dbReference type="HAMAP" id="MF_00403_B">
    <property type="entry name" value="Ribosomal_uS12_B"/>
    <property type="match status" value="1"/>
</dbReference>
<dbReference type="InterPro" id="IPR012340">
    <property type="entry name" value="NA-bd_OB-fold"/>
</dbReference>
<dbReference type="InterPro" id="IPR006032">
    <property type="entry name" value="Ribosomal_uS12"/>
</dbReference>
<dbReference type="InterPro" id="IPR005679">
    <property type="entry name" value="Ribosomal_uS12_bac"/>
</dbReference>
<dbReference type="NCBIfam" id="TIGR00981">
    <property type="entry name" value="rpsL_bact"/>
    <property type="match status" value="1"/>
</dbReference>
<dbReference type="PANTHER" id="PTHR11652">
    <property type="entry name" value="30S RIBOSOMAL PROTEIN S12 FAMILY MEMBER"/>
    <property type="match status" value="1"/>
</dbReference>
<dbReference type="Pfam" id="PF00164">
    <property type="entry name" value="Ribosom_S12_S23"/>
    <property type="match status" value="1"/>
</dbReference>
<dbReference type="PIRSF" id="PIRSF002133">
    <property type="entry name" value="Ribosomal_S12/S23"/>
    <property type="match status" value="1"/>
</dbReference>
<dbReference type="PRINTS" id="PR01034">
    <property type="entry name" value="RIBOSOMALS12"/>
</dbReference>
<dbReference type="SUPFAM" id="SSF50249">
    <property type="entry name" value="Nucleic acid-binding proteins"/>
    <property type="match status" value="1"/>
</dbReference>
<dbReference type="PROSITE" id="PS00055">
    <property type="entry name" value="RIBOSOMAL_S12"/>
    <property type="match status" value="1"/>
</dbReference>
<accession>Q2L8Y5</accession>
<sequence>MPTIKQLIRNARQPIRNVTKSPALGGCPQRRGTCTRVYTITPKKPNSALRKVARVRLTSGFEITAYIPGIGHNSQEHSVVLVRGGRVKDLPGVRYHIVRGTLDAVGVKDRQQGRSKYGVKKPK</sequence>
<keyword id="KW-0150">Chloroplast</keyword>
<keyword id="KW-0934">Plastid</keyword>
<keyword id="KW-1185">Reference proteome</keyword>
<keyword id="KW-0687">Ribonucleoprotein</keyword>
<keyword id="KW-0689">Ribosomal protein</keyword>
<keyword id="KW-0694">RNA-binding</keyword>
<keyword id="KW-0699">rRNA-binding</keyword>
<evidence type="ECO:0000250" key="1"/>
<evidence type="ECO:0000255" key="2">
    <source>
        <dbReference type="HAMAP-Rule" id="MF_00403"/>
    </source>
</evidence>
<evidence type="ECO:0000305" key="3"/>
<gene>
    <name type="primary">rps12-A</name>
</gene>
<gene>
    <name type="primary">rps12-B</name>
</gene>
<reference key="1">
    <citation type="journal article" date="2006" name="BMC Genomics">
        <title>The complete chloroplast genome sequence of Gossypium hirsutum: organization and phylogenetic relationships to other angiosperms.</title>
        <authorList>
            <person name="Lee S.-B."/>
            <person name="Kaittanis C."/>
            <person name="Jansen R.K."/>
            <person name="Hostetler J.B."/>
            <person name="Tallon L.J."/>
            <person name="Town C.D."/>
            <person name="Daniell H."/>
        </authorList>
    </citation>
    <scope>NUCLEOTIDE SEQUENCE [LARGE SCALE GENOMIC DNA]</scope>
    <source>
        <strain>cv. Coker 310FR</strain>
    </source>
</reference>